<gene>
    <name type="primary">C4orf33</name>
</gene>
<evidence type="ECO:0000269" key="1">
    <source>
    </source>
</evidence>
<evidence type="ECO:0000269" key="2">
    <source>
    </source>
</evidence>
<evidence type="ECO:0000269" key="3">
    <source>
    </source>
</evidence>
<evidence type="ECO:0000305" key="4"/>
<feature type="chain" id="PRO_0000295714" description="UPF0462 protein C4orf33">
    <location>
        <begin position="1"/>
        <end position="199"/>
    </location>
</feature>
<feature type="sequence variant" id="VAR_033334" description="In dbSNP:rs35199409.">
    <original>R</original>
    <variation>M</variation>
    <location>
        <position position="40"/>
    </location>
</feature>
<feature type="sequence variant" id="VAR_033335" description="In dbSNP:rs2271570.">
    <original>S</original>
    <variation>L</variation>
    <location>
        <position position="104"/>
    </location>
</feature>
<feature type="sequence variant" id="VAR_033336" description="In dbSNP:rs337277." evidence="1 2 3">
    <original>M</original>
    <variation>V</variation>
    <location>
        <position position="107"/>
    </location>
</feature>
<feature type="sequence variant" id="VAR_033337" description="In dbSNP:rs17351999." evidence="1">
    <original>H</original>
    <variation>R</variation>
    <location>
        <position position="166"/>
    </location>
</feature>
<feature type="sequence conflict" description="In Ref. 1; BAC03568." evidence="4" ref="1">
    <original>T</original>
    <variation>A</variation>
    <location>
        <position position="130"/>
    </location>
</feature>
<feature type="sequence conflict" description="In Ref. 5; AAH16358." evidence="4" ref="5">
    <original>Q</original>
    <variation>R</variation>
    <location>
        <position position="159"/>
    </location>
</feature>
<organism>
    <name type="scientific">Homo sapiens</name>
    <name type="common">Human</name>
    <dbReference type="NCBI Taxonomy" id="9606"/>
    <lineage>
        <taxon>Eukaryota</taxon>
        <taxon>Metazoa</taxon>
        <taxon>Chordata</taxon>
        <taxon>Craniata</taxon>
        <taxon>Vertebrata</taxon>
        <taxon>Euteleostomi</taxon>
        <taxon>Mammalia</taxon>
        <taxon>Eutheria</taxon>
        <taxon>Euarchontoglires</taxon>
        <taxon>Primates</taxon>
        <taxon>Haplorrhini</taxon>
        <taxon>Catarrhini</taxon>
        <taxon>Hominidae</taxon>
        <taxon>Homo</taxon>
    </lineage>
</organism>
<proteinExistence type="evidence at protein level"/>
<name>CD033_HUMAN</name>
<accession>Q8N1A6</accession>
<accession>D3DNY2</accession>
<accession>Q6PJF3</accession>
<accession>Q8NBC5</accession>
<sequence>MDFKIEHTWDGFPVKHEPVFIRLNPGDRGVMMDISAPFFRDPPAPLGEPGKPFNELWDYEVVEAFFLNDITEQYLEVELCPHGQHLVLLLSGRRNVWKQELPLSFRMSRGETKWEGKAYLPWSYFPPNVTKFNSFAIHGSKDKRSYEALYPVPQHELQQGQKPDFHCLEYFKSFNFNTLLGEEWKQPESDLWLIEKCDI</sequence>
<comment type="interaction">
    <interactant intactId="EBI-10264911">
        <id>Q8N1A6</id>
    </interactant>
    <interactant intactId="EBI-718729">
        <id>P55212</id>
        <label>CASP6</label>
    </interactant>
    <organismsDiffer>false</organismsDiffer>
    <experiments>3</experiments>
</comment>
<comment type="interaction">
    <interactant intactId="EBI-10264911">
        <id>Q8N1A6</id>
    </interactant>
    <interactant intactId="EBI-21591415">
        <id>P13473-2</id>
        <label>LAMP2</label>
    </interactant>
    <organismsDiffer>false</organismsDiffer>
    <experiments>3</experiments>
</comment>
<comment type="interaction">
    <interactant intactId="EBI-10264911">
        <id>Q8N1A6</id>
    </interactant>
    <interactant intactId="EBI-2623095">
        <id>Q9Y371</id>
        <label>SH3GLB1</label>
    </interactant>
    <organismsDiffer>false</organismsDiffer>
    <experiments>3</experiments>
</comment>
<comment type="interaction">
    <interactant intactId="EBI-10264911">
        <id>Q8N1A6</id>
    </interactant>
    <interactant intactId="EBI-358993">
        <id>Q15645</id>
        <label>TRIP13</label>
    </interactant>
    <organismsDiffer>false</organismsDiffer>
    <experiments>7</experiments>
</comment>
<comment type="interaction">
    <interactant intactId="EBI-10264911">
        <id>Q8N1A6</id>
    </interactant>
    <interactant intactId="EBI-2107455">
        <id>Q08AM6</id>
        <label>VAC14</label>
    </interactant>
    <organismsDiffer>false</organismsDiffer>
    <experiments>8</experiments>
</comment>
<comment type="similarity">
    <text evidence="4">Belongs to the UPF0462 family.</text>
</comment>
<reference key="1">
    <citation type="journal article" date="2004" name="Nat. Genet.">
        <title>Complete sequencing and characterization of 21,243 full-length human cDNAs.</title>
        <authorList>
            <person name="Ota T."/>
            <person name="Suzuki Y."/>
            <person name="Nishikawa T."/>
            <person name="Otsuki T."/>
            <person name="Sugiyama T."/>
            <person name="Irie R."/>
            <person name="Wakamatsu A."/>
            <person name="Hayashi K."/>
            <person name="Sato H."/>
            <person name="Nagai K."/>
            <person name="Kimura K."/>
            <person name="Makita H."/>
            <person name="Sekine M."/>
            <person name="Obayashi M."/>
            <person name="Nishi T."/>
            <person name="Shibahara T."/>
            <person name="Tanaka T."/>
            <person name="Ishii S."/>
            <person name="Yamamoto J."/>
            <person name="Saito K."/>
            <person name="Kawai Y."/>
            <person name="Isono Y."/>
            <person name="Nakamura Y."/>
            <person name="Nagahari K."/>
            <person name="Murakami K."/>
            <person name="Yasuda T."/>
            <person name="Iwayanagi T."/>
            <person name="Wagatsuma M."/>
            <person name="Shiratori A."/>
            <person name="Sudo H."/>
            <person name="Hosoiri T."/>
            <person name="Kaku Y."/>
            <person name="Kodaira H."/>
            <person name="Kondo H."/>
            <person name="Sugawara M."/>
            <person name="Takahashi M."/>
            <person name="Kanda K."/>
            <person name="Yokoi T."/>
            <person name="Furuya T."/>
            <person name="Kikkawa E."/>
            <person name="Omura Y."/>
            <person name="Abe K."/>
            <person name="Kamihara K."/>
            <person name="Katsuta N."/>
            <person name="Sato K."/>
            <person name="Tanikawa M."/>
            <person name="Yamazaki M."/>
            <person name="Ninomiya K."/>
            <person name="Ishibashi T."/>
            <person name="Yamashita H."/>
            <person name="Murakawa K."/>
            <person name="Fujimori K."/>
            <person name="Tanai H."/>
            <person name="Kimata M."/>
            <person name="Watanabe M."/>
            <person name="Hiraoka S."/>
            <person name="Chiba Y."/>
            <person name="Ishida S."/>
            <person name="Ono Y."/>
            <person name="Takiguchi S."/>
            <person name="Watanabe S."/>
            <person name="Yosida M."/>
            <person name="Hotuta T."/>
            <person name="Kusano J."/>
            <person name="Kanehori K."/>
            <person name="Takahashi-Fujii A."/>
            <person name="Hara H."/>
            <person name="Tanase T.-O."/>
            <person name="Nomura Y."/>
            <person name="Togiya S."/>
            <person name="Komai F."/>
            <person name="Hara R."/>
            <person name="Takeuchi K."/>
            <person name="Arita M."/>
            <person name="Imose N."/>
            <person name="Musashino K."/>
            <person name="Yuuki H."/>
            <person name="Oshima A."/>
            <person name="Sasaki N."/>
            <person name="Aotsuka S."/>
            <person name="Yoshikawa Y."/>
            <person name="Matsunawa H."/>
            <person name="Ichihara T."/>
            <person name="Shiohata N."/>
            <person name="Sano S."/>
            <person name="Moriya S."/>
            <person name="Momiyama H."/>
            <person name="Satoh N."/>
            <person name="Takami S."/>
            <person name="Terashima Y."/>
            <person name="Suzuki O."/>
            <person name="Nakagawa S."/>
            <person name="Senoh A."/>
            <person name="Mizoguchi H."/>
            <person name="Goto Y."/>
            <person name="Shimizu F."/>
            <person name="Wakebe H."/>
            <person name="Hishigaki H."/>
            <person name="Watanabe T."/>
            <person name="Sugiyama A."/>
            <person name="Takemoto M."/>
            <person name="Kawakami B."/>
            <person name="Yamazaki M."/>
            <person name="Watanabe K."/>
            <person name="Kumagai A."/>
            <person name="Itakura S."/>
            <person name="Fukuzumi Y."/>
            <person name="Fujimori Y."/>
            <person name="Komiyama M."/>
            <person name="Tashiro H."/>
            <person name="Tanigami A."/>
            <person name="Fujiwara T."/>
            <person name="Ono T."/>
            <person name="Yamada K."/>
            <person name="Fujii Y."/>
            <person name="Ozaki K."/>
            <person name="Hirao M."/>
            <person name="Ohmori Y."/>
            <person name="Kawabata A."/>
            <person name="Hikiji T."/>
            <person name="Kobatake N."/>
            <person name="Inagaki H."/>
            <person name="Ikema Y."/>
            <person name="Okamoto S."/>
            <person name="Okitani R."/>
            <person name="Kawakami T."/>
            <person name="Noguchi S."/>
            <person name="Itoh T."/>
            <person name="Shigeta K."/>
            <person name="Senba T."/>
            <person name="Matsumura K."/>
            <person name="Nakajima Y."/>
            <person name="Mizuno T."/>
            <person name="Morinaga M."/>
            <person name="Sasaki M."/>
            <person name="Togashi T."/>
            <person name="Oyama M."/>
            <person name="Hata H."/>
            <person name="Watanabe M."/>
            <person name="Komatsu T."/>
            <person name="Mizushima-Sugano J."/>
            <person name="Satoh T."/>
            <person name="Shirai Y."/>
            <person name="Takahashi Y."/>
            <person name="Nakagawa K."/>
            <person name="Okumura K."/>
            <person name="Nagase T."/>
            <person name="Nomura N."/>
            <person name="Kikuchi H."/>
            <person name="Masuho Y."/>
            <person name="Yamashita R."/>
            <person name="Nakai K."/>
            <person name="Yada T."/>
            <person name="Nakamura Y."/>
            <person name="Ohara O."/>
            <person name="Isogai T."/>
            <person name="Sugano S."/>
        </authorList>
    </citation>
    <scope>NUCLEOTIDE SEQUENCE [LARGE SCALE MRNA]</scope>
    <scope>VARIANTS VAL-107 AND ARG-166</scope>
    <source>
        <tissue>Brain</tissue>
    </source>
</reference>
<reference key="2">
    <citation type="journal article" date="2007" name="BMC Genomics">
        <title>The full-ORF clone resource of the German cDNA consortium.</title>
        <authorList>
            <person name="Bechtel S."/>
            <person name="Rosenfelder H."/>
            <person name="Duda A."/>
            <person name="Schmidt C.P."/>
            <person name="Ernst U."/>
            <person name="Wellenreuther R."/>
            <person name="Mehrle A."/>
            <person name="Schuster C."/>
            <person name="Bahr A."/>
            <person name="Bloecker H."/>
            <person name="Heubner D."/>
            <person name="Hoerlein A."/>
            <person name="Michel G."/>
            <person name="Wedler H."/>
            <person name="Koehrer K."/>
            <person name="Ottenwaelder B."/>
            <person name="Poustka A."/>
            <person name="Wiemann S."/>
            <person name="Schupp I."/>
        </authorList>
    </citation>
    <scope>NUCLEOTIDE SEQUENCE [LARGE SCALE MRNA]</scope>
    <scope>VARIANT VAL-107</scope>
    <source>
        <tissue>Endometrium</tissue>
    </source>
</reference>
<reference key="3">
    <citation type="journal article" date="2005" name="Nature">
        <title>Generation and annotation of the DNA sequences of human chromosomes 2 and 4.</title>
        <authorList>
            <person name="Hillier L.W."/>
            <person name="Graves T.A."/>
            <person name="Fulton R.S."/>
            <person name="Fulton L.A."/>
            <person name="Pepin K.H."/>
            <person name="Minx P."/>
            <person name="Wagner-McPherson C."/>
            <person name="Layman D."/>
            <person name="Wylie K."/>
            <person name="Sekhon M."/>
            <person name="Becker M.C."/>
            <person name="Fewell G.A."/>
            <person name="Delehaunty K.D."/>
            <person name="Miner T.L."/>
            <person name="Nash W.E."/>
            <person name="Kremitzki C."/>
            <person name="Oddy L."/>
            <person name="Du H."/>
            <person name="Sun H."/>
            <person name="Bradshaw-Cordum H."/>
            <person name="Ali J."/>
            <person name="Carter J."/>
            <person name="Cordes M."/>
            <person name="Harris A."/>
            <person name="Isak A."/>
            <person name="van Brunt A."/>
            <person name="Nguyen C."/>
            <person name="Du F."/>
            <person name="Courtney L."/>
            <person name="Kalicki J."/>
            <person name="Ozersky P."/>
            <person name="Abbott S."/>
            <person name="Armstrong J."/>
            <person name="Belter E.A."/>
            <person name="Caruso L."/>
            <person name="Cedroni M."/>
            <person name="Cotton M."/>
            <person name="Davidson T."/>
            <person name="Desai A."/>
            <person name="Elliott G."/>
            <person name="Erb T."/>
            <person name="Fronick C."/>
            <person name="Gaige T."/>
            <person name="Haakenson W."/>
            <person name="Haglund K."/>
            <person name="Holmes A."/>
            <person name="Harkins R."/>
            <person name="Kim K."/>
            <person name="Kruchowski S.S."/>
            <person name="Strong C.M."/>
            <person name="Grewal N."/>
            <person name="Goyea E."/>
            <person name="Hou S."/>
            <person name="Levy A."/>
            <person name="Martinka S."/>
            <person name="Mead K."/>
            <person name="McLellan M.D."/>
            <person name="Meyer R."/>
            <person name="Randall-Maher J."/>
            <person name="Tomlinson C."/>
            <person name="Dauphin-Kohlberg S."/>
            <person name="Kozlowicz-Reilly A."/>
            <person name="Shah N."/>
            <person name="Swearengen-Shahid S."/>
            <person name="Snider J."/>
            <person name="Strong J.T."/>
            <person name="Thompson J."/>
            <person name="Yoakum M."/>
            <person name="Leonard S."/>
            <person name="Pearman C."/>
            <person name="Trani L."/>
            <person name="Radionenko M."/>
            <person name="Waligorski J.E."/>
            <person name="Wang C."/>
            <person name="Rock S.M."/>
            <person name="Tin-Wollam A.-M."/>
            <person name="Maupin R."/>
            <person name="Latreille P."/>
            <person name="Wendl M.C."/>
            <person name="Yang S.-P."/>
            <person name="Pohl C."/>
            <person name="Wallis J.W."/>
            <person name="Spieth J."/>
            <person name="Bieri T.A."/>
            <person name="Berkowicz N."/>
            <person name="Nelson J.O."/>
            <person name="Osborne J."/>
            <person name="Ding L."/>
            <person name="Meyer R."/>
            <person name="Sabo A."/>
            <person name="Shotland Y."/>
            <person name="Sinha P."/>
            <person name="Wohldmann P.E."/>
            <person name="Cook L.L."/>
            <person name="Hickenbotham M.T."/>
            <person name="Eldred J."/>
            <person name="Williams D."/>
            <person name="Jones T.A."/>
            <person name="She X."/>
            <person name="Ciccarelli F.D."/>
            <person name="Izaurralde E."/>
            <person name="Taylor J."/>
            <person name="Schmutz J."/>
            <person name="Myers R.M."/>
            <person name="Cox D.R."/>
            <person name="Huang X."/>
            <person name="McPherson J.D."/>
            <person name="Mardis E.R."/>
            <person name="Clifton S.W."/>
            <person name="Warren W.C."/>
            <person name="Chinwalla A.T."/>
            <person name="Eddy S.R."/>
            <person name="Marra M.A."/>
            <person name="Ovcharenko I."/>
            <person name="Furey T.S."/>
            <person name="Miller W."/>
            <person name="Eichler E.E."/>
            <person name="Bork P."/>
            <person name="Suyama M."/>
            <person name="Torrents D."/>
            <person name="Waterston R.H."/>
            <person name="Wilson R.K."/>
        </authorList>
    </citation>
    <scope>NUCLEOTIDE SEQUENCE [LARGE SCALE GENOMIC DNA]</scope>
</reference>
<reference key="4">
    <citation type="submission" date="2005-09" db="EMBL/GenBank/DDBJ databases">
        <authorList>
            <person name="Mural R.J."/>
            <person name="Istrail S."/>
            <person name="Sutton G.G."/>
            <person name="Florea L."/>
            <person name="Halpern A.L."/>
            <person name="Mobarry C.M."/>
            <person name="Lippert R."/>
            <person name="Walenz B."/>
            <person name="Shatkay H."/>
            <person name="Dew I."/>
            <person name="Miller J.R."/>
            <person name="Flanigan M.J."/>
            <person name="Edwards N.J."/>
            <person name="Bolanos R."/>
            <person name="Fasulo D."/>
            <person name="Halldorsson B.V."/>
            <person name="Hannenhalli S."/>
            <person name="Turner R."/>
            <person name="Yooseph S."/>
            <person name="Lu F."/>
            <person name="Nusskern D.R."/>
            <person name="Shue B.C."/>
            <person name="Zheng X.H."/>
            <person name="Zhong F."/>
            <person name="Delcher A.L."/>
            <person name="Huson D.H."/>
            <person name="Kravitz S.A."/>
            <person name="Mouchard L."/>
            <person name="Reinert K."/>
            <person name="Remington K.A."/>
            <person name="Clark A.G."/>
            <person name="Waterman M.S."/>
            <person name="Eichler E.E."/>
            <person name="Adams M.D."/>
            <person name="Hunkapiller M.W."/>
            <person name="Myers E.W."/>
            <person name="Venter J.C."/>
        </authorList>
    </citation>
    <scope>NUCLEOTIDE SEQUENCE [LARGE SCALE GENOMIC DNA]</scope>
</reference>
<reference key="5">
    <citation type="journal article" date="2004" name="Genome Res.">
        <title>The status, quality, and expansion of the NIH full-length cDNA project: the Mammalian Gene Collection (MGC).</title>
        <authorList>
            <consortium name="The MGC Project Team"/>
        </authorList>
    </citation>
    <scope>NUCLEOTIDE SEQUENCE [LARGE SCALE MRNA]</scope>
    <scope>VARIANT VAL-107</scope>
    <source>
        <tissue>Brain</tissue>
        <tissue>Eye</tissue>
    </source>
</reference>
<reference key="6">
    <citation type="journal article" date="2011" name="BMC Syst. Biol.">
        <title>Initial characterization of the human central proteome.</title>
        <authorList>
            <person name="Burkard T.R."/>
            <person name="Planyavsky M."/>
            <person name="Kaupe I."/>
            <person name="Breitwieser F.P."/>
            <person name="Buerckstuemmer T."/>
            <person name="Bennett K.L."/>
            <person name="Superti-Furga G."/>
            <person name="Colinge J."/>
        </authorList>
    </citation>
    <scope>IDENTIFICATION BY MASS SPECTROMETRY [LARGE SCALE ANALYSIS]</scope>
</reference>
<protein>
    <recommendedName>
        <fullName>UPF0462 protein C4orf33</fullName>
    </recommendedName>
</protein>
<dbReference type="EMBL" id="AK091022">
    <property type="protein sequence ID" value="BAC03568.1"/>
    <property type="molecule type" value="mRNA"/>
</dbReference>
<dbReference type="EMBL" id="BX538164">
    <property type="protein sequence ID" value="CAD98044.1"/>
    <property type="molecule type" value="mRNA"/>
</dbReference>
<dbReference type="EMBL" id="AC093826">
    <property type="status" value="NOT_ANNOTATED_CDS"/>
    <property type="molecule type" value="Genomic_DNA"/>
</dbReference>
<dbReference type="EMBL" id="CH471056">
    <property type="protein sequence ID" value="EAX05162.1"/>
    <property type="molecule type" value="Genomic_DNA"/>
</dbReference>
<dbReference type="EMBL" id="CH471056">
    <property type="protein sequence ID" value="EAX05166.1"/>
    <property type="molecule type" value="Genomic_DNA"/>
</dbReference>
<dbReference type="EMBL" id="BC016358">
    <property type="protein sequence ID" value="AAH16358.1"/>
    <property type="molecule type" value="mRNA"/>
</dbReference>
<dbReference type="EMBL" id="BC032582">
    <property type="protein sequence ID" value="AAH32582.1"/>
    <property type="molecule type" value="mRNA"/>
</dbReference>
<dbReference type="CCDS" id="CCDS3741.1"/>
<dbReference type="RefSeq" id="NP_001093253.1">
    <property type="nucleotide sequence ID" value="NM_001099783.2"/>
</dbReference>
<dbReference type="RefSeq" id="NP_775758.2">
    <property type="nucleotide sequence ID" value="NM_173487.3"/>
</dbReference>
<dbReference type="RefSeq" id="XP_005262791.1">
    <property type="nucleotide sequence ID" value="XM_005262734.4"/>
</dbReference>
<dbReference type="SMR" id="Q8N1A6"/>
<dbReference type="BioGRID" id="126319">
    <property type="interactions" value="5"/>
</dbReference>
<dbReference type="FunCoup" id="Q8N1A6">
    <property type="interactions" value="517"/>
</dbReference>
<dbReference type="IntAct" id="Q8N1A6">
    <property type="interactions" value="5"/>
</dbReference>
<dbReference type="STRING" id="9606.ENSP00000281146"/>
<dbReference type="iPTMnet" id="Q8N1A6"/>
<dbReference type="PhosphoSitePlus" id="Q8N1A6"/>
<dbReference type="BioMuta" id="C4orf33"/>
<dbReference type="jPOST" id="Q8N1A6"/>
<dbReference type="MassIVE" id="Q8N1A6"/>
<dbReference type="PaxDb" id="9606-ENSP00000281146"/>
<dbReference type="PeptideAtlas" id="Q8N1A6"/>
<dbReference type="ProteomicsDB" id="71579"/>
<dbReference type="Pumba" id="Q8N1A6"/>
<dbReference type="Antibodypedia" id="27038">
    <property type="antibodies" value="79 antibodies from 18 providers"/>
</dbReference>
<dbReference type="DNASU" id="132321"/>
<dbReference type="Ensembl" id="ENST00000281146.9">
    <property type="protein sequence ID" value="ENSP00000281146.4"/>
    <property type="gene ID" value="ENSG00000151470.13"/>
</dbReference>
<dbReference type="Ensembl" id="ENST00000425929.6">
    <property type="protein sequence ID" value="ENSP00000401090.1"/>
    <property type="gene ID" value="ENSG00000151470.13"/>
</dbReference>
<dbReference type="GeneID" id="132321"/>
<dbReference type="KEGG" id="hsa:132321"/>
<dbReference type="MANE-Select" id="ENST00000425929.6">
    <property type="protein sequence ID" value="ENSP00000401090.1"/>
    <property type="RefSeq nucleotide sequence ID" value="NM_001099783.2"/>
    <property type="RefSeq protein sequence ID" value="NP_001093253.1"/>
</dbReference>
<dbReference type="UCSC" id="uc003igu.5">
    <property type="organism name" value="human"/>
</dbReference>
<dbReference type="AGR" id="HGNC:27025"/>
<dbReference type="CTD" id="132321"/>
<dbReference type="DisGeNET" id="132321"/>
<dbReference type="GeneCards" id="C4orf33"/>
<dbReference type="HGNC" id="HGNC:27025">
    <property type="gene designation" value="C4orf33"/>
</dbReference>
<dbReference type="HPA" id="ENSG00000151470">
    <property type="expression patterns" value="Low tissue specificity"/>
</dbReference>
<dbReference type="neXtProt" id="NX_Q8N1A6"/>
<dbReference type="OpenTargets" id="ENSG00000151470"/>
<dbReference type="PharmGKB" id="PA162379743"/>
<dbReference type="VEuPathDB" id="HostDB:ENSG00000151470"/>
<dbReference type="eggNOG" id="ENOG502R3ZD">
    <property type="taxonomic scope" value="Eukaryota"/>
</dbReference>
<dbReference type="GeneTree" id="ENSGT00390000006284"/>
<dbReference type="InParanoid" id="Q8N1A6"/>
<dbReference type="OMA" id="TIFGEEW"/>
<dbReference type="OrthoDB" id="10056816at2759"/>
<dbReference type="PAN-GO" id="Q8N1A6">
    <property type="GO annotations" value="0 GO annotations based on evolutionary models"/>
</dbReference>
<dbReference type="PhylomeDB" id="Q8N1A6"/>
<dbReference type="TreeFam" id="TF313077"/>
<dbReference type="PathwayCommons" id="Q8N1A6"/>
<dbReference type="SignaLink" id="Q8N1A6"/>
<dbReference type="BioGRID-ORCS" id="132321">
    <property type="hits" value="10 hits in 1126 CRISPR screens"/>
</dbReference>
<dbReference type="GenomeRNAi" id="132321"/>
<dbReference type="Pharos" id="Q8N1A6">
    <property type="development level" value="Tdark"/>
</dbReference>
<dbReference type="PRO" id="PR:Q8N1A6"/>
<dbReference type="Proteomes" id="UP000005640">
    <property type="component" value="Chromosome 4"/>
</dbReference>
<dbReference type="RNAct" id="Q8N1A6">
    <property type="molecule type" value="protein"/>
</dbReference>
<dbReference type="Bgee" id="ENSG00000151470">
    <property type="expression patterns" value="Expressed in monocyte and 148 other cell types or tissues"/>
</dbReference>
<dbReference type="ExpressionAtlas" id="Q8N1A6">
    <property type="expression patterns" value="baseline and differential"/>
</dbReference>
<dbReference type="Gene3D" id="2.60.40.1190">
    <property type="match status" value="1"/>
</dbReference>
<dbReference type="PANTHER" id="PTHR31475">
    <property type="entry name" value="UPF0462 PROTEIN"/>
    <property type="match status" value="1"/>
</dbReference>
<dbReference type="PANTHER" id="PTHR31475:SF3">
    <property type="entry name" value="UPF0462 PROTEIN C4ORF33"/>
    <property type="match status" value="1"/>
</dbReference>
<keyword id="KW-1267">Proteomics identification</keyword>
<keyword id="KW-1185">Reference proteome</keyword>